<accession>B1P1B1</accession>
<organism>
    <name type="scientific">Chilobrachys guangxiensis</name>
    <name type="common">Chinese earth tiger tarantula</name>
    <name type="synonym">Chilobrachys jingzhao</name>
    <dbReference type="NCBI Taxonomy" id="278060"/>
    <lineage>
        <taxon>Eukaryota</taxon>
        <taxon>Metazoa</taxon>
        <taxon>Ecdysozoa</taxon>
        <taxon>Arthropoda</taxon>
        <taxon>Chelicerata</taxon>
        <taxon>Arachnida</taxon>
        <taxon>Araneae</taxon>
        <taxon>Mygalomorphae</taxon>
        <taxon>Theraphosidae</taxon>
        <taxon>Chilobrachys</taxon>
    </lineage>
</organism>
<comment type="function">
    <text>Probable ion channel inhibitor.</text>
</comment>
<comment type="subcellular location">
    <subcellularLocation>
        <location>Secreted</location>
    </subcellularLocation>
</comment>
<comment type="tissue specificity">
    <text>Expressed by the venom gland.</text>
</comment>
<comment type="domain">
    <text evidence="1">The presence of a 'disulfide through disulfide knot' structurally defines this protein as a knottin.</text>
</comment>
<comment type="mass spectrometry">
    <text>Monoisotopic mass.</text>
</comment>
<comment type="similarity">
    <text>Belongs to the neurotoxin 36 family. 01 subfamily.</text>
</comment>
<name>JZ50C_CHIGU</name>
<protein>
    <recommendedName>
        <fullName>U4-theraphotoxin-Cg1a</fullName>
        <shortName>U4-TRTX-Cg1a</shortName>
    </recommendedName>
    <alternativeName>
        <fullName>Jingzhaotoxin-50.3</fullName>
        <shortName>JZTX-50.3</shortName>
    </alternativeName>
    <alternativeName>
        <fullName>Peptide F7-7.25</fullName>
    </alternativeName>
</protein>
<reference key="1">
    <citation type="journal article" date="2008" name="Cell. Mol. Life Sci.">
        <title>Molecular diversity and evolution of cystine knot toxins of the tarantula Chilobrachys jingzhao.</title>
        <authorList>
            <person name="Chen J."/>
            <person name="Deng M."/>
            <person name="He Q."/>
            <person name="Meng E."/>
            <person name="Jiang L."/>
            <person name="Liao Z."/>
            <person name="Rong M."/>
            <person name="Liang S."/>
        </authorList>
    </citation>
    <scope>NUCLEOTIDE SEQUENCE [LARGE SCALE MRNA]</scope>
    <source>
        <tissue>Venom gland</tissue>
    </source>
</reference>
<reference key="2">
    <citation type="journal article" date="2007" name="Proteomics">
        <title>Proteomic and peptidomic analysis of the venom from Chinese tarantula Chilobrachys jingzhao.</title>
        <authorList>
            <person name="Liao Z."/>
            <person name="Cao J."/>
            <person name="Li S."/>
            <person name="Yan X."/>
            <person name="Hu W."/>
            <person name="He Q."/>
            <person name="Chen J."/>
            <person name="Tang J."/>
            <person name="Xie J."/>
            <person name="Liang S."/>
        </authorList>
    </citation>
    <scope>PROTEIN SEQUENCE OF 40-74</scope>
    <scope>MASS SPECTROMETRY</scope>
    <source>
        <tissue>Venom</tissue>
    </source>
</reference>
<sequence>MNATIFALLLLLNLAMHNAAEQSSETDMDDTLLIPEINRGRCIEEGKWCPKKAPCCGRLECKGPSPKQKKCTRP</sequence>
<dbReference type="EMBL" id="EU233842">
    <property type="protein sequence ID" value="ABY71661.1"/>
    <property type="molecule type" value="mRNA"/>
</dbReference>
<dbReference type="SMR" id="B1P1B1"/>
<dbReference type="TCDB" id="8.B.4.1.6">
    <property type="family name" value="the conotoxin t (conotoxin t) family"/>
</dbReference>
<dbReference type="ArachnoServer" id="AS000790">
    <property type="toxin name" value="U4-theraphotoxin-Cg1a"/>
</dbReference>
<dbReference type="GO" id="GO:0005576">
    <property type="term" value="C:extracellular region"/>
    <property type="evidence" value="ECO:0007669"/>
    <property type="project" value="UniProtKB-SubCell"/>
</dbReference>
<dbReference type="GO" id="GO:0099106">
    <property type="term" value="F:ion channel regulator activity"/>
    <property type="evidence" value="ECO:0007669"/>
    <property type="project" value="UniProtKB-KW"/>
</dbReference>
<dbReference type="GO" id="GO:0090729">
    <property type="term" value="F:toxin activity"/>
    <property type="evidence" value="ECO:0007669"/>
    <property type="project" value="UniProtKB-KW"/>
</dbReference>
<feature type="signal peptide" evidence="2">
    <location>
        <begin position="1"/>
        <end position="19"/>
    </location>
</feature>
<feature type="propeptide" id="PRO_0000398514" evidence="3">
    <location>
        <begin position="20"/>
        <end position="39"/>
    </location>
</feature>
<feature type="peptide" id="PRO_0000398515" description="U4-theraphotoxin-Cg1a">
    <location>
        <begin position="40"/>
        <end position="74"/>
    </location>
</feature>
<feature type="disulfide bond" evidence="1">
    <location>
        <begin position="42"/>
        <end position="56"/>
    </location>
</feature>
<feature type="disulfide bond" evidence="1">
    <location>
        <begin position="49"/>
        <end position="61"/>
    </location>
</feature>
<feature type="disulfide bond" evidence="1">
    <location>
        <begin position="55"/>
        <end position="71"/>
    </location>
</feature>
<proteinExistence type="evidence at protein level"/>
<keyword id="KW-0903">Direct protein sequencing</keyword>
<keyword id="KW-1015">Disulfide bond</keyword>
<keyword id="KW-0872">Ion channel impairing toxin</keyword>
<keyword id="KW-0960">Knottin</keyword>
<keyword id="KW-0964">Secreted</keyword>
<keyword id="KW-0732">Signal</keyword>
<keyword id="KW-0800">Toxin</keyword>
<evidence type="ECO:0000250" key="1"/>
<evidence type="ECO:0000255" key="2"/>
<evidence type="ECO:0000269" key="3">
    <source>
    </source>
</evidence>